<dbReference type="EC" id="5.6.2.1"/>
<dbReference type="EMBL" id="AY653733">
    <property type="protein sequence ID" value="AAV50494.1"/>
    <property type="molecule type" value="Genomic_DNA"/>
</dbReference>
<dbReference type="SMR" id="Q5UQB5"/>
<dbReference type="KEGG" id="vg:9924828"/>
<dbReference type="OrthoDB" id="1523at10239"/>
<dbReference type="Proteomes" id="UP000001134">
    <property type="component" value="Genome"/>
</dbReference>
<dbReference type="GO" id="GO:0044423">
    <property type="term" value="C:virion component"/>
    <property type="evidence" value="ECO:0007669"/>
    <property type="project" value="UniProtKB-KW"/>
</dbReference>
<dbReference type="GO" id="GO:0003677">
    <property type="term" value="F:DNA binding"/>
    <property type="evidence" value="ECO:0007669"/>
    <property type="project" value="UniProtKB-KW"/>
</dbReference>
<dbReference type="GO" id="GO:0003917">
    <property type="term" value="F:DNA topoisomerase type I (single strand cut, ATP-independent) activity"/>
    <property type="evidence" value="ECO:0007669"/>
    <property type="project" value="UniProtKB-EC"/>
</dbReference>
<dbReference type="GO" id="GO:0046872">
    <property type="term" value="F:metal ion binding"/>
    <property type="evidence" value="ECO:0007669"/>
    <property type="project" value="UniProtKB-KW"/>
</dbReference>
<dbReference type="GO" id="GO:0006265">
    <property type="term" value="P:DNA topological change"/>
    <property type="evidence" value="ECO:0007669"/>
    <property type="project" value="InterPro"/>
</dbReference>
<dbReference type="CDD" id="cd00186">
    <property type="entry name" value="TOP1Ac"/>
    <property type="match status" value="1"/>
</dbReference>
<dbReference type="Gene3D" id="3.40.50.140">
    <property type="match status" value="1"/>
</dbReference>
<dbReference type="Gene3D" id="1.10.460.10">
    <property type="entry name" value="Topoisomerase I, domain 2"/>
    <property type="match status" value="1"/>
</dbReference>
<dbReference type="Gene3D" id="2.70.20.10">
    <property type="entry name" value="Topoisomerase I, domain 3"/>
    <property type="match status" value="1"/>
</dbReference>
<dbReference type="Gene3D" id="1.10.290.10">
    <property type="entry name" value="Topoisomerase I, domain 4"/>
    <property type="match status" value="1"/>
</dbReference>
<dbReference type="HAMAP" id="MF_00952">
    <property type="entry name" value="Topoisom_1_prok"/>
    <property type="match status" value="1"/>
</dbReference>
<dbReference type="InterPro" id="IPR000380">
    <property type="entry name" value="Topo_IA"/>
</dbReference>
<dbReference type="InterPro" id="IPR003601">
    <property type="entry name" value="Topo_IA_2"/>
</dbReference>
<dbReference type="InterPro" id="IPR023406">
    <property type="entry name" value="Topo_IA_AS"/>
</dbReference>
<dbReference type="InterPro" id="IPR013497">
    <property type="entry name" value="Topo_IA_cen"/>
</dbReference>
<dbReference type="InterPro" id="IPR013824">
    <property type="entry name" value="Topo_IA_cen_sub1"/>
</dbReference>
<dbReference type="InterPro" id="IPR013825">
    <property type="entry name" value="Topo_IA_cen_sub2"/>
</dbReference>
<dbReference type="InterPro" id="IPR013826">
    <property type="entry name" value="Topo_IA_cen_sub3"/>
</dbReference>
<dbReference type="InterPro" id="IPR023405">
    <property type="entry name" value="Topo_IA_core_domain"/>
</dbReference>
<dbReference type="InterPro" id="IPR003602">
    <property type="entry name" value="Topo_IA_DNA-bd_dom"/>
</dbReference>
<dbReference type="InterPro" id="IPR005733">
    <property type="entry name" value="TopoI_bac-type"/>
</dbReference>
<dbReference type="InterPro" id="IPR028612">
    <property type="entry name" value="Topoisom_1_IA"/>
</dbReference>
<dbReference type="InterPro" id="IPR025589">
    <property type="entry name" value="Toprim_C_rpt"/>
</dbReference>
<dbReference type="InterPro" id="IPR006171">
    <property type="entry name" value="TOPRIM_dom"/>
</dbReference>
<dbReference type="NCBIfam" id="TIGR01051">
    <property type="entry name" value="topA_bact"/>
    <property type="match status" value="1"/>
</dbReference>
<dbReference type="PANTHER" id="PTHR42785:SF1">
    <property type="entry name" value="DNA TOPOISOMERASE"/>
    <property type="match status" value="1"/>
</dbReference>
<dbReference type="PANTHER" id="PTHR42785">
    <property type="entry name" value="DNA TOPOISOMERASE, TYPE IA, CORE"/>
    <property type="match status" value="1"/>
</dbReference>
<dbReference type="Pfam" id="PF01131">
    <property type="entry name" value="Topoisom_bac"/>
    <property type="match status" value="2"/>
</dbReference>
<dbReference type="Pfam" id="PF01751">
    <property type="entry name" value="Toprim"/>
    <property type="match status" value="1"/>
</dbReference>
<dbReference type="Pfam" id="PF13368">
    <property type="entry name" value="Toprim_C_rpt"/>
    <property type="match status" value="2"/>
</dbReference>
<dbReference type="PRINTS" id="PR00417">
    <property type="entry name" value="PRTPISMRASEI"/>
</dbReference>
<dbReference type="SMART" id="SM00437">
    <property type="entry name" value="TOP1Ac"/>
    <property type="match status" value="1"/>
</dbReference>
<dbReference type="SMART" id="SM00436">
    <property type="entry name" value="TOP1Bc"/>
    <property type="match status" value="1"/>
</dbReference>
<dbReference type="SMART" id="SM00493">
    <property type="entry name" value="TOPRIM"/>
    <property type="match status" value="1"/>
</dbReference>
<dbReference type="SUPFAM" id="SSF56712">
    <property type="entry name" value="Prokaryotic type I DNA topoisomerase"/>
    <property type="match status" value="1"/>
</dbReference>
<dbReference type="PROSITE" id="PS00396">
    <property type="entry name" value="TOPO_IA_1"/>
    <property type="match status" value="1"/>
</dbReference>
<dbReference type="PROSITE" id="PS52039">
    <property type="entry name" value="TOPO_IA_2"/>
    <property type="match status" value="1"/>
</dbReference>
<dbReference type="PROSITE" id="PS50880">
    <property type="entry name" value="TOPRIM"/>
    <property type="match status" value="1"/>
</dbReference>
<reference key="1">
    <citation type="journal article" date="2004" name="Science">
        <title>The 1.2-megabase genome sequence of Mimivirus.</title>
        <authorList>
            <person name="Raoult D."/>
            <person name="Audic S."/>
            <person name="Robert C."/>
            <person name="Abergel C."/>
            <person name="Renesto P."/>
            <person name="Ogata H."/>
            <person name="La Scola B."/>
            <person name="Susan M."/>
            <person name="Claverie J.-M."/>
        </authorList>
    </citation>
    <scope>NUCLEOTIDE SEQUENCE [LARGE SCALE GENOMIC DNA]</scope>
    <source>
        <strain>Rowbotham-Bradford</strain>
    </source>
</reference>
<reference key="2">
    <citation type="journal article" date="2006" name="J. Virol.">
        <title>Mimivirus giant particles incorporate a large fraction of anonymous and unique gene products.</title>
        <authorList>
            <person name="Renesto P."/>
            <person name="Abergel C."/>
            <person name="Decloquement P."/>
            <person name="Moinier D."/>
            <person name="Azza S."/>
            <person name="Ogata H."/>
            <person name="Fourquet P."/>
            <person name="Gorvel J.-P."/>
            <person name="Claverie J.-M."/>
            <person name="Raoult D."/>
        </authorList>
    </citation>
    <scope>IDENTIFICATION BY MASS SPECTROMETRY [LARGE SCALE ANALYSIS]</scope>
    <scope>SUBCELLULAR LOCATION</scope>
</reference>
<evidence type="ECO:0000250" key="1"/>
<evidence type="ECO:0000255" key="2">
    <source>
        <dbReference type="PROSITE-ProRule" id="PRU01383"/>
    </source>
</evidence>
<evidence type="ECO:0000256" key="3">
    <source>
        <dbReference type="SAM" id="MobiDB-lite"/>
    </source>
</evidence>
<evidence type="ECO:0000269" key="4">
    <source>
    </source>
</evidence>
<evidence type="ECO:0000305" key="5"/>
<name>TOP1P_MIMIV</name>
<organismHost>
    <name type="scientific">Acanthamoeba polyphaga</name>
    <name type="common">Amoeba</name>
    <dbReference type="NCBI Taxonomy" id="5757"/>
</organismHost>
<accession>Q5UQB5</accession>
<comment type="function">
    <text evidence="1">Releases the supercoiling and torsional tension of DNA, which is introduced during the DNA replication and transcription, by transiently cleaving and rejoining one strand of the DNA duplex. Introduces a single-strand break via transesterification at a target site in duplex DNA. The scissile phosphodiester is attacked by the catalytic tyrosine of the enzyme, resulting in the formation of a DNA-(5'-phosphotyrosyl)-enzyme intermediate and the expulsion of a 3'-OH DNA strand. The free DNA strand then undergoes passage around the unbroken strand, thus removing DNA supercoils. Finally, in the religation step, the DNA 3'-OH attacks the covalent intermediate to expel the active-site tyrosine and restore the DNA phosphodiester backbone (By similarity).</text>
</comment>
<comment type="catalytic activity">
    <reaction>
        <text>ATP-independent breakage of single-stranded DNA, followed by passage and rejoining.</text>
        <dbReference type="EC" id="5.6.2.1"/>
    </reaction>
</comment>
<comment type="cofactor">
    <cofactor evidence="1">
        <name>Mg(2+)</name>
        <dbReference type="ChEBI" id="CHEBI:18420"/>
    </cofactor>
</comment>
<comment type="subcellular location">
    <subcellularLocation>
        <location evidence="4">Virion</location>
    </subcellularLocation>
</comment>
<comment type="similarity">
    <text evidence="2 5">Belongs to the type IA topoisomerase family.</text>
</comment>
<organism>
    <name type="scientific">Acanthamoeba polyphaga mimivirus</name>
    <name type="common">APMV</name>
    <dbReference type="NCBI Taxonomy" id="212035"/>
    <lineage>
        <taxon>Viruses</taxon>
        <taxon>Varidnaviria</taxon>
        <taxon>Bamfordvirae</taxon>
        <taxon>Nucleocytoviricota</taxon>
        <taxon>Megaviricetes</taxon>
        <taxon>Imitervirales</taxon>
        <taxon>Mimiviridae</taxon>
        <taxon>Megamimivirinae</taxon>
        <taxon>Mimivirus</taxon>
        <taxon>Mimivirus bradfordmassiliense</taxon>
    </lineage>
</organism>
<sequence length="854" mass="96946">MSILILLESPGKISKISSILGKNYVVKASMGHFRDLDPKKMSIDFDNDFEPVYIVTKPDVVKNLKSAMKNIDLVYLAADEDREGEAIAQSLYDVLKPSNYKRLRFNAITKDAIMSAIKNAGDIDKNLVDAQKARRVLDRLFGYLISPILQRQIGGKLSAGRVQSVTVRIIIDKENEIKNFINKNADSSYFKVSGTFNGAKATLHESNDKKPFDLETAYKGKTAQIALINSENPNSKVVNFMKRCLKSQFFIHSVEDKMTTRSPAPPFTTSTLQQEANRKFGMSIDSTMKTAQKLYEGGYITYMRTDSVEISAEGHRDIKKIITDQYGADYYQKNLYKNKAANSQEAHEAIRPTHPELLTLEGEIEDAYQIKLYKLIWQRTIASQMKPAKIKVTIIQISISKYVEDKLNPFYYFQSQIETVVFPGFMKVYVESIDDPDTDNQITKNFTGKIPTVGSKVTMEEIIARQEYMRPPPRYSEASLVKKLEELGIGRPSTYVNTIKTIINREYVKITDVPGIKKDITIYSIKSENKKHIMEVYEDTDTILLGKENKKIVPTNLGITVNDFLMKYFPEFLDYKFTANMETDLDYVSTGTKNWVDIVQDFYDKLKPIVDELSKQKGLSQSSERLLGEDNDGNEITATKTKFGPVVRKKIGDKYVYAKIKDPLTLDTIKLSDAIKLLEYPKNLGQYKGFDVLLQKGDYGFYLSYNKENFSLGEIDDPEDINLDTAIKAIEAKKANNIAEFNLTENGKKIKAIVLNGKYGYYVQVTRNRIKKNYPIPKDLDPNNLTEQQILSIISVKKTYKKSAPKGGSKTIRKPSQTKYSQTKSTKSTKSTKSTNKKFVGKSAKKTTKKTTKK</sequence>
<gene>
    <name type="primary">TOP1P</name>
    <name type="ordered locus">MIMI_L221</name>
</gene>
<feature type="chain" id="PRO_0000145183" description="DNA topoisomerase 1 type prokaryotic">
    <location>
        <begin position="1"/>
        <end position="854"/>
    </location>
</feature>
<feature type="domain" description="Toprim">
    <location>
        <begin position="2"/>
        <end position="110"/>
    </location>
</feature>
<feature type="domain" description="Topo IA-type catalytic" evidence="2">
    <location>
        <begin position="124"/>
        <end position="610"/>
    </location>
</feature>
<feature type="region of interest" description="Interaction with DNA" evidence="1">
    <location>
        <begin position="158"/>
        <end position="163"/>
    </location>
</feature>
<feature type="region of interest" description="Disordered" evidence="3">
    <location>
        <begin position="802"/>
        <end position="854"/>
    </location>
</feature>
<feature type="compositionally biased region" description="Low complexity" evidence="3">
    <location>
        <begin position="814"/>
        <end position="834"/>
    </location>
</feature>
<feature type="compositionally biased region" description="Basic residues" evidence="3">
    <location>
        <begin position="835"/>
        <end position="854"/>
    </location>
</feature>
<feature type="active site" description="O-(5'-phospho-DNA)-tyrosine intermediate" evidence="2">
    <location>
        <position position="302"/>
    </location>
</feature>
<feature type="binding site" evidence="1">
    <location>
        <position position="8"/>
    </location>
    <ligand>
        <name>Mg(2+)</name>
        <dbReference type="ChEBI" id="CHEBI:18420"/>
        <note>catalytic</note>
    </ligand>
</feature>
<feature type="binding site" evidence="1">
    <location>
        <position position="79"/>
    </location>
    <ligand>
        <name>Mg(2+)</name>
        <dbReference type="ChEBI" id="CHEBI:18420"/>
        <note>catalytic</note>
    </ligand>
</feature>
<feature type="site" description="Interaction with DNA" evidence="1">
    <location>
        <position position="32"/>
    </location>
</feature>
<feature type="site" description="Interaction with DNA" evidence="1">
    <location>
        <position position="134"/>
    </location>
</feature>
<feature type="site" description="Interaction with DNA" evidence="1">
    <location>
        <position position="135"/>
    </location>
</feature>
<feature type="site" description="Interaction with DNA" evidence="1">
    <location>
        <position position="138"/>
    </location>
</feature>
<feature type="site" description="Interaction with DNA" evidence="1">
    <location>
        <position position="143"/>
    </location>
</feature>
<feature type="site" description="Interaction with DNA" evidence="1">
    <location>
        <position position="304"/>
    </location>
</feature>
<feature type="site" description="Interaction with DNA" evidence="1">
    <location>
        <position position="505"/>
    </location>
</feature>
<keyword id="KW-0238">DNA-binding</keyword>
<keyword id="KW-0413">Isomerase</keyword>
<keyword id="KW-0460">Magnesium</keyword>
<keyword id="KW-0479">Metal-binding</keyword>
<keyword id="KW-1185">Reference proteome</keyword>
<keyword id="KW-0799">Topoisomerase</keyword>
<keyword id="KW-0946">Virion</keyword>
<protein>
    <recommendedName>
        <fullName>DNA topoisomerase 1 type prokaryotic</fullName>
        <ecNumber>5.6.2.1</ecNumber>
    </recommendedName>
</protein>
<proteinExistence type="evidence at protein level"/>